<protein>
    <recommendedName>
        <fullName evidence="1">2-dehydro-3-deoxyphosphooctonate aldolase</fullName>
        <ecNumber evidence="1">2.5.1.55</ecNumber>
    </recommendedName>
    <alternativeName>
        <fullName evidence="1">3-deoxy-D-manno-octulosonic acid 8-phosphate synthase</fullName>
    </alternativeName>
    <alternativeName>
        <fullName evidence="1">KDO-8-phosphate synthase</fullName>
        <shortName evidence="1">KDO 8-P synthase</shortName>
        <shortName evidence="1">KDOPS</shortName>
    </alternativeName>
    <alternativeName>
        <fullName evidence="1">Phospho-2-dehydro-3-deoxyoctonate aldolase</fullName>
    </alternativeName>
</protein>
<evidence type="ECO:0000255" key="1">
    <source>
        <dbReference type="HAMAP-Rule" id="MF_00056"/>
    </source>
</evidence>
<accession>A0Q5J1</accession>
<proteinExistence type="inferred from homology"/>
<feature type="chain" id="PRO_1000117782" description="2-dehydro-3-deoxyphosphooctonate aldolase">
    <location>
        <begin position="1"/>
        <end position="275"/>
    </location>
</feature>
<organism>
    <name type="scientific">Francisella tularensis subsp. novicida (strain U112)</name>
    <dbReference type="NCBI Taxonomy" id="401614"/>
    <lineage>
        <taxon>Bacteria</taxon>
        <taxon>Pseudomonadati</taxon>
        <taxon>Pseudomonadota</taxon>
        <taxon>Gammaproteobacteria</taxon>
        <taxon>Thiotrichales</taxon>
        <taxon>Francisellaceae</taxon>
        <taxon>Francisella</taxon>
    </lineage>
</organism>
<name>KDSA_FRATN</name>
<comment type="catalytic activity">
    <reaction evidence="1">
        <text>D-arabinose 5-phosphate + phosphoenolpyruvate + H2O = 3-deoxy-alpha-D-manno-2-octulosonate-8-phosphate + phosphate</text>
        <dbReference type="Rhea" id="RHEA:14053"/>
        <dbReference type="ChEBI" id="CHEBI:15377"/>
        <dbReference type="ChEBI" id="CHEBI:43474"/>
        <dbReference type="ChEBI" id="CHEBI:57693"/>
        <dbReference type="ChEBI" id="CHEBI:58702"/>
        <dbReference type="ChEBI" id="CHEBI:85985"/>
        <dbReference type="EC" id="2.5.1.55"/>
    </reaction>
</comment>
<comment type="pathway">
    <text evidence="1">Carbohydrate biosynthesis; 3-deoxy-D-manno-octulosonate biosynthesis; 3-deoxy-D-manno-octulosonate from D-ribulose 5-phosphate: step 2/3.</text>
</comment>
<comment type="pathway">
    <text evidence="1">Bacterial outer membrane biogenesis; lipopolysaccharide biosynthesis.</text>
</comment>
<comment type="subcellular location">
    <subcellularLocation>
        <location evidence="1">Cytoplasm</location>
    </subcellularLocation>
</comment>
<comment type="similarity">
    <text evidence="1">Belongs to the KdsA family.</text>
</comment>
<sequence>MKIANFEVGNGKPFFLMSGPCVIESEQMAMDTAGYLAEVTRDLGINFVYKSSFDKANRSSINSFRGLGVDKGLEILAKVKKTYNVPVVTDVHEDTPFAEVAEVVDVLQTPAFLCRQTNFILEVCKQGKPVNIKKGQFLAPWDMQHVVTKAKSTGNEQIMVCERGVSFGYNNLVSDMRSLEIMKATGCPVVFDATHSVQLPGGQGSSSGGQREFVPVLSKAAMAVGIDGLFMETHPNPDEAKSDGPNSFPMYKIKEFLSLLKELDHLVKSQPKTEL</sequence>
<reference key="1">
    <citation type="journal article" date="2007" name="Genome Biol.">
        <title>Comparison of Francisella tularensis genomes reveals evolutionary events associated with the emergence of human pathogenic strains.</title>
        <authorList>
            <person name="Rohmer L."/>
            <person name="Fong C."/>
            <person name="Abmayr S."/>
            <person name="Wasnick M."/>
            <person name="Larson Freeman T.J."/>
            <person name="Radey M."/>
            <person name="Guina T."/>
            <person name="Svensson K."/>
            <person name="Hayden H.S."/>
            <person name="Jacobs M."/>
            <person name="Gallagher L.A."/>
            <person name="Manoil C."/>
            <person name="Ernst R.K."/>
            <person name="Drees B."/>
            <person name="Buckley D."/>
            <person name="Haugen E."/>
            <person name="Bovee D."/>
            <person name="Zhou Y."/>
            <person name="Chang J."/>
            <person name="Levy R."/>
            <person name="Lim R."/>
            <person name="Gillett W."/>
            <person name="Guenthener D."/>
            <person name="Kang A."/>
            <person name="Shaffer S.A."/>
            <person name="Taylor G."/>
            <person name="Chen J."/>
            <person name="Gallis B."/>
            <person name="D'Argenio D.A."/>
            <person name="Forsman M."/>
            <person name="Olson M.V."/>
            <person name="Goodlett D.R."/>
            <person name="Kaul R."/>
            <person name="Miller S.I."/>
            <person name="Brittnacher M.J."/>
        </authorList>
    </citation>
    <scope>NUCLEOTIDE SEQUENCE [LARGE SCALE GENOMIC DNA]</scope>
    <source>
        <strain>U112</strain>
    </source>
</reference>
<dbReference type="EC" id="2.5.1.55" evidence="1"/>
<dbReference type="EMBL" id="CP000439">
    <property type="protein sequence ID" value="ABK89506.1"/>
    <property type="molecule type" value="Genomic_DNA"/>
</dbReference>
<dbReference type="RefSeq" id="WP_003038670.1">
    <property type="nucleotide sequence ID" value="NC_008601.1"/>
</dbReference>
<dbReference type="SMR" id="A0Q5J1"/>
<dbReference type="KEGG" id="ftn:FTN_0611"/>
<dbReference type="BioCyc" id="FTUL401614:G1G75-636-MONOMER"/>
<dbReference type="UniPathway" id="UPA00030"/>
<dbReference type="UniPathway" id="UPA00357">
    <property type="reaction ID" value="UER00474"/>
</dbReference>
<dbReference type="Proteomes" id="UP000000762">
    <property type="component" value="Chromosome"/>
</dbReference>
<dbReference type="GO" id="GO:0005737">
    <property type="term" value="C:cytoplasm"/>
    <property type="evidence" value="ECO:0007669"/>
    <property type="project" value="UniProtKB-SubCell"/>
</dbReference>
<dbReference type="GO" id="GO:0008676">
    <property type="term" value="F:3-deoxy-8-phosphooctulonate synthase activity"/>
    <property type="evidence" value="ECO:0007669"/>
    <property type="project" value="UniProtKB-UniRule"/>
</dbReference>
<dbReference type="GO" id="GO:0019294">
    <property type="term" value="P:keto-3-deoxy-D-manno-octulosonic acid biosynthetic process"/>
    <property type="evidence" value="ECO:0007669"/>
    <property type="project" value="UniProtKB-UniRule"/>
</dbReference>
<dbReference type="Gene3D" id="3.20.20.70">
    <property type="entry name" value="Aldolase class I"/>
    <property type="match status" value="1"/>
</dbReference>
<dbReference type="HAMAP" id="MF_00056">
    <property type="entry name" value="KDO8P_synth"/>
    <property type="match status" value="1"/>
</dbReference>
<dbReference type="InterPro" id="IPR013785">
    <property type="entry name" value="Aldolase_TIM"/>
</dbReference>
<dbReference type="InterPro" id="IPR006218">
    <property type="entry name" value="DAHP1/KDSA"/>
</dbReference>
<dbReference type="InterPro" id="IPR006269">
    <property type="entry name" value="KDO8P_synthase"/>
</dbReference>
<dbReference type="NCBIfam" id="TIGR01362">
    <property type="entry name" value="KDO8P_synth"/>
    <property type="match status" value="1"/>
</dbReference>
<dbReference type="NCBIfam" id="NF003543">
    <property type="entry name" value="PRK05198.1"/>
    <property type="match status" value="1"/>
</dbReference>
<dbReference type="PANTHER" id="PTHR21057">
    <property type="entry name" value="PHOSPHO-2-DEHYDRO-3-DEOXYHEPTONATE ALDOLASE"/>
    <property type="match status" value="1"/>
</dbReference>
<dbReference type="Pfam" id="PF00793">
    <property type="entry name" value="DAHP_synth_1"/>
    <property type="match status" value="1"/>
</dbReference>
<dbReference type="SUPFAM" id="SSF51569">
    <property type="entry name" value="Aldolase"/>
    <property type="match status" value="1"/>
</dbReference>
<gene>
    <name evidence="1" type="primary">kdsA</name>
    <name type="ordered locus">FTN_0611</name>
</gene>
<keyword id="KW-0963">Cytoplasm</keyword>
<keyword id="KW-0448">Lipopolysaccharide biosynthesis</keyword>
<keyword id="KW-0808">Transferase</keyword>